<name>ATPA_THEM4</name>
<protein>
    <recommendedName>
        <fullName evidence="1">ATP synthase subunit alpha</fullName>
        <ecNumber evidence="1">7.1.2.2</ecNumber>
    </recommendedName>
    <alternativeName>
        <fullName evidence="1">ATP synthase F1 sector subunit alpha</fullName>
    </alternativeName>
    <alternativeName>
        <fullName evidence="1">F-ATPase subunit alpha</fullName>
    </alternativeName>
</protein>
<organism>
    <name type="scientific">Thermosipho melanesiensis (strain DSM 12029 / CIP 104789 / BI429)</name>
    <dbReference type="NCBI Taxonomy" id="391009"/>
    <lineage>
        <taxon>Bacteria</taxon>
        <taxon>Thermotogati</taxon>
        <taxon>Thermotogota</taxon>
        <taxon>Thermotogae</taxon>
        <taxon>Thermotogales</taxon>
        <taxon>Fervidobacteriaceae</taxon>
        <taxon>Thermosipho</taxon>
    </lineage>
</organism>
<dbReference type="EC" id="7.1.2.2" evidence="1"/>
<dbReference type="EMBL" id="CP000716">
    <property type="protein sequence ID" value="ABR30164.1"/>
    <property type="molecule type" value="Genomic_DNA"/>
</dbReference>
<dbReference type="RefSeq" id="WP_012056525.1">
    <property type="nucleotide sequence ID" value="NC_009616.1"/>
</dbReference>
<dbReference type="SMR" id="A6LJR3"/>
<dbReference type="STRING" id="391009.Tmel_0292"/>
<dbReference type="KEGG" id="tme:Tmel_0292"/>
<dbReference type="eggNOG" id="COG0056">
    <property type="taxonomic scope" value="Bacteria"/>
</dbReference>
<dbReference type="HOGENOM" id="CLU_010091_2_1_0"/>
<dbReference type="OrthoDB" id="9803053at2"/>
<dbReference type="Proteomes" id="UP000001110">
    <property type="component" value="Chromosome"/>
</dbReference>
<dbReference type="GO" id="GO:0005886">
    <property type="term" value="C:plasma membrane"/>
    <property type="evidence" value="ECO:0007669"/>
    <property type="project" value="UniProtKB-SubCell"/>
</dbReference>
<dbReference type="GO" id="GO:0045259">
    <property type="term" value="C:proton-transporting ATP synthase complex"/>
    <property type="evidence" value="ECO:0007669"/>
    <property type="project" value="UniProtKB-KW"/>
</dbReference>
<dbReference type="GO" id="GO:0043531">
    <property type="term" value="F:ADP binding"/>
    <property type="evidence" value="ECO:0007669"/>
    <property type="project" value="TreeGrafter"/>
</dbReference>
<dbReference type="GO" id="GO:0005524">
    <property type="term" value="F:ATP binding"/>
    <property type="evidence" value="ECO:0007669"/>
    <property type="project" value="UniProtKB-UniRule"/>
</dbReference>
<dbReference type="GO" id="GO:0046933">
    <property type="term" value="F:proton-transporting ATP synthase activity, rotational mechanism"/>
    <property type="evidence" value="ECO:0007669"/>
    <property type="project" value="UniProtKB-UniRule"/>
</dbReference>
<dbReference type="CDD" id="cd18113">
    <property type="entry name" value="ATP-synt_F1_alpha_C"/>
    <property type="match status" value="1"/>
</dbReference>
<dbReference type="CDD" id="cd18116">
    <property type="entry name" value="ATP-synt_F1_alpha_N"/>
    <property type="match status" value="1"/>
</dbReference>
<dbReference type="CDD" id="cd01132">
    <property type="entry name" value="F1-ATPase_alpha_CD"/>
    <property type="match status" value="1"/>
</dbReference>
<dbReference type="FunFam" id="1.20.150.20:FF:000001">
    <property type="entry name" value="ATP synthase subunit alpha"/>
    <property type="match status" value="1"/>
</dbReference>
<dbReference type="FunFam" id="2.40.30.20:FF:000001">
    <property type="entry name" value="ATP synthase subunit alpha"/>
    <property type="match status" value="1"/>
</dbReference>
<dbReference type="FunFam" id="3.40.50.300:FF:000002">
    <property type="entry name" value="ATP synthase subunit alpha"/>
    <property type="match status" value="1"/>
</dbReference>
<dbReference type="Gene3D" id="2.40.30.20">
    <property type="match status" value="1"/>
</dbReference>
<dbReference type="Gene3D" id="1.20.150.20">
    <property type="entry name" value="ATP synthase alpha/beta chain, C-terminal domain"/>
    <property type="match status" value="1"/>
</dbReference>
<dbReference type="Gene3D" id="3.40.50.300">
    <property type="entry name" value="P-loop containing nucleotide triphosphate hydrolases"/>
    <property type="match status" value="1"/>
</dbReference>
<dbReference type="HAMAP" id="MF_01346">
    <property type="entry name" value="ATP_synth_alpha_bact"/>
    <property type="match status" value="1"/>
</dbReference>
<dbReference type="InterPro" id="IPR023366">
    <property type="entry name" value="ATP_synth_asu-like_sf"/>
</dbReference>
<dbReference type="InterPro" id="IPR000793">
    <property type="entry name" value="ATP_synth_asu_C"/>
</dbReference>
<dbReference type="InterPro" id="IPR038376">
    <property type="entry name" value="ATP_synth_asu_C_sf"/>
</dbReference>
<dbReference type="InterPro" id="IPR033732">
    <property type="entry name" value="ATP_synth_F1_a_nt-bd_dom"/>
</dbReference>
<dbReference type="InterPro" id="IPR005294">
    <property type="entry name" value="ATP_synth_F1_asu"/>
</dbReference>
<dbReference type="InterPro" id="IPR020003">
    <property type="entry name" value="ATPase_a/bsu_AS"/>
</dbReference>
<dbReference type="InterPro" id="IPR004100">
    <property type="entry name" value="ATPase_F1/V1/A1_a/bsu_N"/>
</dbReference>
<dbReference type="InterPro" id="IPR036121">
    <property type="entry name" value="ATPase_F1/V1/A1_a/bsu_N_sf"/>
</dbReference>
<dbReference type="InterPro" id="IPR000194">
    <property type="entry name" value="ATPase_F1/V1/A1_a/bsu_nucl-bd"/>
</dbReference>
<dbReference type="InterPro" id="IPR027417">
    <property type="entry name" value="P-loop_NTPase"/>
</dbReference>
<dbReference type="NCBIfam" id="TIGR00962">
    <property type="entry name" value="atpA"/>
    <property type="match status" value="1"/>
</dbReference>
<dbReference type="NCBIfam" id="NF009884">
    <property type="entry name" value="PRK13343.1"/>
    <property type="match status" value="1"/>
</dbReference>
<dbReference type="PANTHER" id="PTHR48082">
    <property type="entry name" value="ATP SYNTHASE SUBUNIT ALPHA, MITOCHONDRIAL"/>
    <property type="match status" value="1"/>
</dbReference>
<dbReference type="PANTHER" id="PTHR48082:SF2">
    <property type="entry name" value="ATP SYNTHASE SUBUNIT ALPHA, MITOCHONDRIAL"/>
    <property type="match status" value="1"/>
</dbReference>
<dbReference type="Pfam" id="PF00006">
    <property type="entry name" value="ATP-synt_ab"/>
    <property type="match status" value="1"/>
</dbReference>
<dbReference type="Pfam" id="PF00306">
    <property type="entry name" value="ATP-synt_ab_C"/>
    <property type="match status" value="1"/>
</dbReference>
<dbReference type="Pfam" id="PF02874">
    <property type="entry name" value="ATP-synt_ab_N"/>
    <property type="match status" value="1"/>
</dbReference>
<dbReference type="PIRSF" id="PIRSF039088">
    <property type="entry name" value="F_ATPase_subunit_alpha"/>
    <property type="match status" value="1"/>
</dbReference>
<dbReference type="SUPFAM" id="SSF47917">
    <property type="entry name" value="C-terminal domain of alpha and beta subunits of F1 ATP synthase"/>
    <property type="match status" value="1"/>
</dbReference>
<dbReference type="SUPFAM" id="SSF50615">
    <property type="entry name" value="N-terminal domain of alpha and beta subunits of F1 ATP synthase"/>
    <property type="match status" value="1"/>
</dbReference>
<dbReference type="SUPFAM" id="SSF52540">
    <property type="entry name" value="P-loop containing nucleoside triphosphate hydrolases"/>
    <property type="match status" value="1"/>
</dbReference>
<dbReference type="PROSITE" id="PS00152">
    <property type="entry name" value="ATPASE_ALPHA_BETA"/>
    <property type="match status" value="1"/>
</dbReference>
<evidence type="ECO:0000255" key="1">
    <source>
        <dbReference type="HAMAP-Rule" id="MF_01346"/>
    </source>
</evidence>
<proteinExistence type="inferred from homology"/>
<feature type="chain" id="PRO_1000055087" description="ATP synthase subunit alpha">
    <location>
        <begin position="1"/>
        <end position="507"/>
    </location>
</feature>
<feature type="binding site" evidence="1">
    <location>
        <begin position="170"/>
        <end position="177"/>
    </location>
    <ligand>
        <name>ATP</name>
        <dbReference type="ChEBI" id="CHEBI:30616"/>
    </ligand>
</feature>
<feature type="site" description="Required for activity" evidence="1">
    <location>
        <position position="363"/>
    </location>
</feature>
<sequence>MRINPGEIVKVLESKIEGFKEEINLNDVGKVIQVGDGIARAYGLNNVMANEMVEFVETGTIGMAFNLEEDNVGIIILGDYKDIKEGYTVKRLNRIMQVPVGEALLGRVVNPLGEPLDGLGPIDAKEYRDVEVKAPGVIYRKPVDTPLQTGIKLIDALIPIGRGQRELIIGDRQTGKTAIAIDTIINQKGKGVYCIYVAIGQKASAVARLVDKLKQHGAMEYTTVVVASAADNASLQYIAPYAGCAMGEYFMYKGKDALVIYDDLSKHAVAYRQLSLLLRRPPGREAYPGDVFYLHSRLLERAARLDDKYGGGSLTALPIIETQANDISAYIPTNVISITDGQIYLEPSLFYAGQRPAVNIGLSVSRVGGAAQVKAMKKVAGSLKLDLAQYQELETFAQFATELDPATQAQITRGQRLMELMKQEQYSPLEVEEQVAVLYAGINGYLDDLDVEKVRDFEKRFLQYLKENKSELLKQIRETKDLNEELENELRNAIEDYKSEFVKMYGK</sequence>
<accession>A6LJR3</accession>
<gene>
    <name evidence="1" type="primary">atpA</name>
    <name type="ordered locus">Tmel_0292</name>
</gene>
<keyword id="KW-0066">ATP synthesis</keyword>
<keyword id="KW-0067">ATP-binding</keyword>
<keyword id="KW-0997">Cell inner membrane</keyword>
<keyword id="KW-1003">Cell membrane</keyword>
<keyword id="KW-0139">CF(1)</keyword>
<keyword id="KW-0375">Hydrogen ion transport</keyword>
<keyword id="KW-0406">Ion transport</keyword>
<keyword id="KW-0472">Membrane</keyword>
<keyword id="KW-0547">Nucleotide-binding</keyword>
<keyword id="KW-1278">Translocase</keyword>
<keyword id="KW-0813">Transport</keyword>
<comment type="function">
    <text evidence="1">Produces ATP from ADP in the presence of a proton gradient across the membrane. The alpha chain is a regulatory subunit.</text>
</comment>
<comment type="catalytic activity">
    <reaction evidence="1">
        <text>ATP + H2O + 4 H(+)(in) = ADP + phosphate + 5 H(+)(out)</text>
        <dbReference type="Rhea" id="RHEA:57720"/>
        <dbReference type="ChEBI" id="CHEBI:15377"/>
        <dbReference type="ChEBI" id="CHEBI:15378"/>
        <dbReference type="ChEBI" id="CHEBI:30616"/>
        <dbReference type="ChEBI" id="CHEBI:43474"/>
        <dbReference type="ChEBI" id="CHEBI:456216"/>
        <dbReference type="EC" id="7.1.2.2"/>
    </reaction>
</comment>
<comment type="subunit">
    <text evidence="1">F-type ATPases have 2 components, CF(1) - the catalytic core - and CF(0) - the membrane proton channel. CF(1) has five subunits: alpha(3), beta(3), gamma(1), delta(1), epsilon(1). CF(0) has three main subunits: a(1), b(2) and c(9-12). The alpha and beta chains form an alternating ring which encloses part of the gamma chain. CF(1) is attached to CF(0) by a central stalk formed by the gamma and epsilon chains, while a peripheral stalk is formed by the delta and b chains.</text>
</comment>
<comment type="subcellular location">
    <subcellularLocation>
        <location evidence="1">Cell inner membrane</location>
        <topology evidence="1">Peripheral membrane protein</topology>
    </subcellularLocation>
</comment>
<comment type="similarity">
    <text evidence="1">Belongs to the ATPase alpha/beta chains family.</text>
</comment>
<reference key="1">
    <citation type="submission" date="2007-05" db="EMBL/GenBank/DDBJ databases">
        <title>Complete sequence of Thermosipho melanesiensis BI429.</title>
        <authorList>
            <consortium name="US DOE Joint Genome Institute"/>
            <person name="Copeland A."/>
            <person name="Lucas S."/>
            <person name="Lapidus A."/>
            <person name="Barry K."/>
            <person name="Glavina del Rio T."/>
            <person name="Dalin E."/>
            <person name="Tice H."/>
            <person name="Pitluck S."/>
            <person name="Chertkov O."/>
            <person name="Brettin T."/>
            <person name="Bruce D."/>
            <person name="Detter J.C."/>
            <person name="Han C."/>
            <person name="Schmutz J."/>
            <person name="Larimer F."/>
            <person name="Land M."/>
            <person name="Hauser L."/>
            <person name="Kyrpides N."/>
            <person name="Mikhailova N."/>
            <person name="Nelson K."/>
            <person name="Gogarten J.P."/>
            <person name="Noll K."/>
            <person name="Richardson P."/>
        </authorList>
    </citation>
    <scope>NUCLEOTIDE SEQUENCE [LARGE SCALE GENOMIC DNA]</scope>
    <source>
        <strain>DSM 12029 / CIP 104789 / BI429</strain>
    </source>
</reference>